<evidence type="ECO:0000250" key="1"/>
<evidence type="ECO:0000250" key="2">
    <source>
        <dbReference type="UniProtKB" id="Q96J84"/>
    </source>
</evidence>
<evidence type="ECO:0000255" key="3"/>
<evidence type="ECO:0000255" key="4">
    <source>
        <dbReference type="PROSITE-ProRule" id="PRU00114"/>
    </source>
</evidence>
<evidence type="ECO:0000256" key="5">
    <source>
        <dbReference type="SAM" id="MobiDB-lite"/>
    </source>
</evidence>
<evidence type="ECO:0000269" key="6">
    <source>
    </source>
</evidence>
<evidence type="ECO:0000269" key="7">
    <source>
    </source>
</evidence>
<evidence type="ECO:0000305" key="8"/>
<dbReference type="EMBL" id="AY249056">
    <property type="protein sequence ID" value="AAP78673.1"/>
    <property type="molecule type" value="mRNA"/>
</dbReference>
<dbReference type="EMBL" id="AABR06018737">
    <property type="status" value="NOT_ANNOTATED_CDS"/>
    <property type="molecule type" value="Genomic_DNA"/>
</dbReference>
<dbReference type="EMBL" id="AABR06018738">
    <property type="status" value="NOT_ANNOTATED_CDS"/>
    <property type="molecule type" value="Genomic_DNA"/>
</dbReference>
<dbReference type="EMBL" id="AY271309">
    <property type="protein sequence ID" value="AAP12626.1"/>
    <property type="molecule type" value="mRNA"/>
</dbReference>
<dbReference type="RefSeq" id="NP_997489.2">
    <property type="nucleotide sequence ID" value="NM_207606.2"/>
</dbReference>
<dbReference type="RefSeq" id="XP_006232739.1">
    <property type="nucleotide sequence ID" value="XM_006232677.3"/>
</dbReference>
<dbReference type="SMR" id="Q6X936"/>
<dbReference type="CORUM" id="Q6X936"/>
<dbReference type="FunCoup" id="Q6X936">
    <property type="interactions" value="935"/>
</dbReference>
<dbReference type="IntAct" id="Q6X936">
    <property type="interactions" value="1"/>
</dbReference>
<dbReference type="MINT" id="Q6X936"/>
<dbReference type="STRING" id="10116.ENSRNOP00000033900"/>
<dbReference type="GlyCosmos" id="Q6X936">
    <property type="glycosylation" value="5 sites, No reported glycans"/>
</dbReference>
<dbReference type="GlyGen" id="Q6X936">
    <property type="glycosylation" value="6 sites"/>
</dbReference>
<dbReference type="iPTMnet" id="Q6X936"/>
<dbReference type="PhosphoSitePlus" id="Q6X936"/>
<dbReference type="PaxDb" id="10116-ENSRNOP00000033900"/>
<dbReference type="Ensembl" id="ENSRNOT00000031743.2">
    <property type="protein sequence ID" value="ENSRNOP00000033900.1"/>
    <property type="gene ID" value="ENSRNOG00000016408.7"/>
</dbReference>
<dbReference type="GeneID" id="310695"/>
<dbReference type="KEGG" id="rno:310695"/>
<dbReference type="UCSC" id="RGD:727883">
    <property type="organism name" value="rat"/>
</dbReference>
<dbReference type="AGR" id="RGD:727883"/>
<dbReference type="CTD" id="55243"/>
<dbReference type="RGD" id="727883">
    <property type="gene designation" value="Kirrel1"/>
</dbReference>
<dbReference type="eggNOG" id="KOG3510">
    <property type="taxonomic scope" value="Eukaryota"/>
</dbReference>
<dbReference type="GeneTree" id="ENSGT00940000155795"/>
<dbReference type="InParanoid" id="Q6X936"/>
<dbReference type="OMA" id="DTGQFNL"/>
<dbReference type="TreeFam" id="TF327139"/>
<dbReference type="Reactome" id="R-RNO-373753">
    <property type="pathway name" value="Nephrin family interactions"/>
</dbReference>
<dbReference type="PRO" id="PR:Q6X936"/>
<dbReference type="Proteomes" id="UP000002494">
    <property type="component" value="Chromosome 2"/>
</dbReference>
<dbReference type="Bgee" id="ENSRNOG00000016408">
    <property type="expression patterns" value="Expressed in ovary and 19 other cell types or tissues"/>
</dbReference>
<dbReference type="ExpressionAtlas" id="Q6X936">
    <property type="expression patterns" value="baseline and differential"/>
</dbReference>
<dbReference type="GO" id="GO:0031253">
    <property type="term" value="C:cell projection membrane"/>
    <property type="evidence" value="ECO:0000314"/>
    <property type="project" value="RGD"/>
</dbReference>
<dbReference type="GO" id="GO:0005911">
    <property type="term" value="C:cell-cell junction"/>
    <property type="evidence" value="ECO:0000314"/>
    <property type="project" value="RGD"/>
</dbReference>
<dbReference type="GO" id="GO:0043198">
    <property type="term" value="C:dendritic shaft"/>
    <property type="evidence" value="ECO:0000266"/>
    <property type="project" value="RGD"/>
</dbReference>
<dbReference type="GO" id="GO:0045121">
    <property type="term" value="C:membrane raft"/>
    <property type="evidence" value="ECO:0000314"/>
    <property type="project" value="UniProtKB"/>
</dbReference>
<dbReference type="GO" id="GO:0048471">
    <property type="term" value="C:perinuclear region of cytoplasm"/>
    <property type="evidence" value="ECO:0000266"/>
    <property type="project" value="RGD"/>
</dbReference>
<dbReference type="GO" id="GO:0005886">
    <property type="term" value="C:plasma membrane"/>
    <property type="evidence" value="ECO:0000266"/>
    <property type="project" value="RGD"/>
</dbReference>
<dbReference type="GO" id="GO:0050839">
    <property type="term" value="F:cell adhesion molecule binding"/>
    <property type="evidence" value="ECO:0000318"/>
    <property type="project" value="GO_Central"/>
</dbReference>
<dbReference type="GO" id="GO:0017022">
    <property type="term" value="F:myosin binding"/>
    <property type="evidence" value="ECO:0000266"/>
    <property type="project" value="RGD"/>
</dbReference>
<dbReference type="GO" id="GO:0098609">
    <property type="term" value="P:cell-cell adhesion"/>
    <property type="evidence" value="ECO:0000266"/>
    <property type="project" value="RGD"/>
</dbReference>
<dbReference type="GO" id="GO:0045217">
    <property type="term" value="P:cell-cell junction maintenance"/>
    <property type="evidence" value="ECO:0000266"/>
    <property type="project" value="RGD"/>
</dbReference>
<dbReference type="GO" id="GO:0003094">
    <property type="term" value="P:glomerular filtration"/>
    <property type="evidence" value="ECO:0000266"/>
    <property type="project" value="RGD"/>
</dbReference>
<dbReference type="GO" id="GO:0030838">
    <property type="term" value="P:positive regulation of actin filament polymerization"/>
    <property type="evidence" value="ECO:0000266"/>
    <property type="project" value="RGD"/>
</dbReference>
<dbReference type="GO" id="GO:0097017">
    <property type="term" value="P:renal protein absorption"/>
    <property type="evidence" value="ECO:0000266"/>
    <property type="project" value="RGD"/>
</dbReference>
<dbReference type="CDD" id="cd00096">
    <property type="entry name" value="Ig"/>
    <property type="match status" value="1"/>
</dbReference>
<dbReference type="CDD" id="cd05759">
    <property type="entry name" value="IgI_2_KIRREL3-like"/>
    <property type="match status" value="1"/>
</dbReference>
<dbReference type="CDD" id="cd05898">
    <property type="entry name" value="IgI_5_KIRREL3"/>
    <property type="match status" value="1"/>
</dbReference>
<dbReference type="CDD" id="cd12087">
    <property type="entry name" value="TM_EGFR-like"/>
    <property type="match status" value="1"/>
</dbReference>
<dbReference type="FunFam" id="2.60.40.10:FF:000232">
    <property type="entry name" value="Kirre like nephrin family adhesion molecule 1"/>
    <property type="match status" value="1"/>
</dbReference>
<dbReference type="FunFam" id="2.60.40.10:FF:000077">
    <property type="entry name" value="Kirre like nephrin family adhesion molecule 3"/>
    <property type="match status" value="1"/>
</dbReference>
<dbReference type="FunFam" id="2.60.40.10:FF:000094">
    <property type="entry name" value="Kirre like nephrin family adhesion molecule 3"/>
    <property type="match status" value="1"/>
</dbReference>
<dbReference type="FunFam" id="2.60.40.10:FF:000103">
    <property type="entry name" value="Kirre like nephrin family adhesion molecule 3"/>
    <property type="match status" value="1"/>
</dbReference>
<dbReference type="FunFam" id="2.60.40.10:FF:000170">
    <property type="entry name" value="Kirre like nephrin family adhesion molecule 3"/>
    <property type="match status" value="1"/>
</dbReference>
<dbReference type="Gene3D" id="2.60.40.10">
    <property type="entry name" value="Immunoglobulins"/>
    <property type="match status" value="5"/>
</dbReference>
<dbReference type="InterPro" id="IPR013162">
    <property type="entry name" value="CD80_C2-set"/>
</dbReference>
<dbReference type="InterPro" id="IPR051275">
    <property type="entry name" value="Cell_adhesion_signaling"/>
</dbReference>
<dbReference type="InterPro" id="IPR007110">
    <property type="entry name" value="Ig-like_dom"/>
</dbReference>
<dbReference type="InterPro" id="IPR036179">
    <property type="entry name" value="Ig-like_dom_sf"/>
</dbReference>
<dbReference type="InterPro" id="IPR013783">
    <property type="entry name" value="Ig-like_fold"/>
</dbReference>
<dbReference type="InterPro" id="IPR013098">
    <property type="entry name" value="Ig_I-set"/>
</dbReference>
<dbReference type="InterPro" id="IPR003599">
    <property type="entry name" value="Ig_sub"/>
</dbReference>
<dbReference type="InterPro" id="IPR003598">
    <property type="entry name" value="Ig_sub2"/>
</dbReference>
<dbReference type="PANTHER" id="PTHR11640:SF14">
    <property type="entry name" value="KIN OF IRRE-LIKE PROTEIN 1"/>
    <property type="match status" value="1"/>
</dbReference>
<dbReference type="PANTHER" id="PTHR11640">
    <property type="entry name" value="NEPHRIN"/>
    <property type="match status" value="1"/>
</dbReference>
<dbReference type="Pfam" id="PF08205">
    <property type="entry name" value="C2-set_2"/>
    <property type="match status" value="1"/>
</dbReference>
<dbReference type="Pfam" id="PF07679">
    <property type="entry name" value="I-set"/>
    <property type="match status" value="1"/>
</dbReference>
<dbReference type="Pfam" id="PF13927">
    <property type="entry name" value="Ig_3"/>
    <property type="match status" value="1"/>
</dbReference>
<dbReference type="SMART" id="SM00409">
    <property type="entry name" value="IG"/>
    <property type="match status" value="5"/>
</dbReference>
<dbReference type="SMART" id="SM00408">
    <property type="entry name" value="IGc2"/>
    <property type="match status" value="2"/>
</dbReference>
<dbReference type="SUPFAM" id="SSF48726">
    <property type="entry name" value="Immunoglobulin"/>
    <property type="match status" value="5"/>
</dbReference>
<dbReference type="PROSITE" id="PS50835">
    <property type="entry name" value="IG_LIKE"/>
    <property type="match status" value="5"/>
</dbReference>
<accession>Q6X936</accession>
<accession>F1M7V1</accession>
<accession>Q80W67</accession>
<keyword id="KW-1003">Cell membrane</keyword>
<keyword id="KW-1015">Disulfide bond</keyword>
<keyword id="KW-0325">Glycoprotein</keyword>
<keyword id="KW-0393">Immunoglobulin domain</keyword>
<keyword id="KW-0472">Membrane</keyword>
<keyword id="KW-0597">Phosphoprotein</keyword>
<keyword id="KW-1185">Reference proteome</keyword>
<keyword id="KW-0677">Repeat</keyword>
<keyword id="KW-0732">Signal</keyword>
<keyword id="KW-0812">Transmembrane</keyword>
<keyword id="KW-1133">Transmembrane helix</keyword>
<feature type="signal peptide" evidence="3">
    <location>
        <begin position="1"/>
        <end position="47"/>
    </location>
</feature>
<feature type="chain" id="PRO_0000015095" description="Kin of IRRE-like protein 1">
    <location>
        <begin position="48"/>
        <end position="789"/>
    </location>
</feature>
<feature type="topological domain" description="Extracellular" evidence="3">
    <location>
        <begin position="48"/>
        <end position="531"/>
    </location>
</feature>
<feature type="transmembrane region" description="Helical" evidence="3">
    <location>
        <begin position="532"/>
        <end position="552"/>
    </location>
</feature>
<feature type="topological domain" description="Cytoplasmic" evidence="3">
    <location>
        <begin position="553"/>
        <end position="789"/>
    </location>
</feature>
<feature type="domain" description="Ig-like C2-type 1">
    <location>
        <begin position="49"/>
        <end position="147"/>
    </location>
</feature>
<feature type="domain" description="Ig-like C2-type 2">
    <location>
        <begin position="152"/>
        <end position="248"/>
    </location>
</feature>
<feature type="domain" description="Ig-like C2-type 3">
    <location>
        <begin position="255"/>
        <end position="335"/>
    </location>
</feature>
<feature type="domain" description="Ig-like C2-type 4">
    <location>
        <begin position="340"/>
        <end position="419"/>
    </location>
</feature>
<feature type="domain" description="Ig-like C2-type 5">
    <location>
        <begin position="424"/>
        <end position="520"/>
    </location>
</feature>
<feature type="region of interest" description="Disordered" evidence="5">
    <location>
        <begin position="687"/>
        <end position="713"/>
    </location>
</feature>
<feature type="short sequence motif" description="Cell attachment site" evidence="3">
    <location>
        <begin position="437"/>
        <end position="439"/>
    </location>
</feature>
<feature type="compositionally biased region" description="Low complexity" evidence="5">
    <location>
        <begin position="694"/>
        <end position="712"/>
    </location>
</feature>
<feature type="modified residue" description="Phosphoserine" evidence="2">
    <location>
        <position position="606"/>
    </location>
</feature>
<feature type="modified residue" description="Phosphotyrosine; by FYN" evidence="7">
    <location>
        <position position="637"/>
    </location>
</feature>
<feature type="modified residue" description="Phosphotyrosine; by FYN" evidence="7">
    <location>
        <position position="638"/>
    </location>
</feature>
<feature type="modified residue" description="Phosphotyrosine" evidence="2">
    <location>
        <position position="654"/>
    </location>
</feature>
<feature type="modified residue" description="Phosphotyrosine" evidence="2">
    <location>
        <position position="657"/>
    </location>
</feature>
<feature type="modified residue" description="Phosphotyrosine" evidence="2">
    <location>
        <position position="756"/>
    </location>
</feature>
<feature type="glycosylation site" description="N-linked (GlcNAc...) asparagine" evidence="3">
    <location>
        <position position="5"/>
    </location>
</feature>
<feature type="glycosylation site" description="N-linked (GlcNAc...) asparagine" evidence="3">
    <location>
        <position position="78"/>
    </location>
</feature>
<feature type="glycosylation site" description="N-linked (GlcNAc...) asparagine" evidence="3">
    <location>
        <position position="172"/>
    </location>
</feature>
<feature type="glycosylation site" description="N-linked (GlcNAc...) asparagine" evidence="3">
    <location>
        <position position="329"/>
    </location>
</feature>
<feature type="glycosylation site" description="N-linked (GlcNAc...) asparagine" evidence="3">
    <location>
        <position position="503"/>
    </location>
</feature>
<feature type="disulfide bond" evidence="4">
    <location>
        <begin position="74"/>
        <end position="132"/>
    </location>
</feature>
<feature type="disulfide bond" evidence="4">
    <location>
        <begin position="175"/>
        <end position="232"/>
    </location>
</feature>
<feature type="disulfide bond" evidence="4">
    <location>
        <begin position="276"/>
        <end position="319"/>
    </location>
</feature>
<feature type="disulfide bond" evidence="4">
    <location>
        <begin position="361"/>
        <end position="403"/>
    </location>
</feature>
<feature type="disulfide bond" evidence="4">
    <location>
        <begin position="445"/>
        <end position="504"/>
    </location>
</feature>
<feature type="sequence conflict" description="In Ref. 1; AAP78673." evidence="8" ref="1">
    <original>YN</original>
    <variation>DS</variation>
    <location>
        <begin position="322"/>
        <end position="323"/>
    </location>
</feature>
<feature type="sequence conflict" description="In Ref. 1; AAP78673." evidence="8" ref="1">
    <original>L</original>
    <variation>V</variation>
    <location>
        <position position="333"/>
    </location>
</feature>
<name>KIRR1_RAT</name>
<organism>
    <name type="scientific">Rattus norvegicus</name>
    <name type="common">Rat</name>
    <dbReference type="NCBI Taxonomy" id="10116"/>
    <lineage>
        <taxon>Eukaryota</taxon>
        <taxon>Metazoa</taxon>
        <taxon>Chordata</taxon>
        <taxon>Craniata</taxon>
        <taxon>Vertebrata</taxon>
        <taxon>Euteleostomi</taxon>
        <taxon>Mammalia</taxon>
        <taxon>Eutheria</taxon>
        <taxon>Euarchontoglires</taxon>
        <taxon>Glires</taxon>
        <taxon>Rodentia</taxon>
        <taxon>Myomorpha</taxon>
        <taxon>Muroidea</taxon>
        <taxon>Muridae</taxon>
        <taxon>Murinae</taxon>
        <taxon>Rattus</taxon>
    </lineage>
</organism>
<sequence>MTLENRSTCLMTCQSSLLPKKPRFLSQKMWAPHLVVAYLIFVTLALALPGTQTRFSQEPADQTVVAGHRAVLPCVLLNYSGIVQWTKDGLALGMGQGLKAWPRYRVVGSADAGQYNLEITDAELSDDASYECQATEAALRSRRAKLTVLIPPEDTRIDGGPVILLQAGTPYNLTCRAFNAKPAATIIWFRDGTQQEGAVTSTELLKDGKRETTISQLLIQPTDLDIGRVFTCRSMNEAIPNGKETSIELDVHHPPTVTLSIEPQTVLEGERVIFTCQATANPEILGYRWAKGGFLIEDAHESRYETNVDYSFFTEPVSCEVYNKVGSTNVSTLVNVHFAPRIVVYPKPTTTDIGSDVTLTCVWVGNPPLTLTWTKKDSNMVLSNSNQLLLKSVTQADAGTYTCRAIVPRIGVAEREVPLYVNGPPIISSEAVQFAVRGDGGKVECFIGSTPPPDRIAWAWKENFLEVGTLERYTVERTNSGSGVLSTLTINNVMEADFQTHYNCTAWNSFGPGTAIIQLEEREVLPVGIIAGATIGAGILLVFSFAALVFFLYRRRKGSRKDVTLRKLDIKVETVNREPLTMHSDREDDTTSISTATRVMKAIYSSFKDDVDLKQDLHCDTIETREEYEMKDPTNGYYNVRAHEDRPSSRAVLYADYRAPGPTRFDGRPSSRLSHSSGYAQLNTYSRAPASDYGTEPTPSGPSAPGGTDTTSQLSYENYEKFNSHPFPGAAGYPTYRLGYPQAPPSGLERTPYEAYDPIGKYATATRFSYTSQHSDYGQRFQQRMQTHV</sequence>
<protein>
    <recommendedName>
        <fullName>Kin of IRRE-like protein 1</fullName>
    </recommendedName>
    <alternativeName>
        <fullName>Kin of irregular chiasm-like protein 1</fullName>
    </alternativeName>
    <alternativeName>
        <fullName>Nephrin-like protein 1</fullName>
    </alternativeName>
</protein>
<comment type="function">
    <text evidence="2">Required for proper function of the glomerular filtration barrier. It is involved in the maintenance of a stable podocyte architecture with interdigitating foot processes connected by specialized cell-cell junctions, known as the slit diaphragm (By similarity). It is a signaling protein that needs the presence of TEC kinases to fully trans-activate the transcription factor AP-1 (By similarity).</text>
</comment>
<comment type="subunit">
    <text evidence="1 7">Interacts with TJP1/ZO-1 and with NPHS2/podocin (via the C-terminus). Interacts with NPHS1/nephrin (via the Ig-like domains); this interaction is dependent on KIRREL1 glycosylation. Homodimer (via the Ig-like domains) (By similarity). Interacts when tyrosine-phosphorylated with GRB2.</text>
</comment>
<comment type="subcellular location">
    <subcellularLocation>
        <location evidence="8">Cell membrane</location>
        <topology evidence="8">Single-pass type I membrane protein</topology>
    </subcellularLocation>
    <text evidence="6">Predominantly located at podocyte slit diaphragm.</text>
</comment>
<comment type="PTM">
    <text evidence="1 7">Phosphorylation probably regulates the interaction with NPHS2 (By similarity). Phosphorylated at Tyr-637 and Tyr-638 by FYN, leading to GRB2 binding.</text>
</comment>
<comment type="PTM">
    <text evidence="1">N-glycosylated.</text>
</comment>
<comment type="similarity">
    <text evidence="8">Belongs to the immunoglobulin superfamily.</text>
</comment>
<reference key="1">
    <citation type="submission" date="2003-03" db="EMBL/GenBank/DDBJ databases">
        <authorList>
            <person name="Kawachi H."/>
            <person name="Koike H."/>
            <person name="Han G.D."/>
            <person name="Shimizu F."/>
        </authorList>
    </citation>
    <scope>NUCLEOTIDE SEQUENCE [MRNA]</scope>
    <source>
        <strain>Wistar</strain>
    </source>
</reference>
<reference key="2">
    <citation type="journal article" date="2004" name="Nature">
        <title>Genome sequence of the Brown Norway rat yields insights into mammalian evolution.</title>
        <authorList>
            <person name="Gibbs R.A."/>
            <person name="Weinstock G.M."/>
            <person name="Metzker M.L."/>
            <person name="Muzny D.M."/>
            <person name="Sodergren E.J."/>
            <person name="Scherer S."/>
            <person name="Scott G."/>
            <person name="Steffen D."/>
            <person name="Worley K.C."/>
            <person name="Burch P.E."/>
            <person name="Okwuonu G."/>
            <person name="Hines S."/>
            <person name="Lewis L."/>
            <person name="Deramo C."/>
            <person name="Delgado O."/>
            <person name="Dugan-Rocha S."/>
            <person name="Miner G."/>
            <person name="Morgan M."/>
            <person name="Hawes A."/>
            <person name="Gill R."/>
            <person name="Holt R.A."/>
            <person name="Adams M.D."/>
            <person name="Amanatides P.G."/>
            <person name="Baden-Tillson H."/>
            <person name="Barnstead M."/>
            <person name="Chin S."/>
            <person name="Evans C.A."/>
            <person name="Ferriera S."/>
            <person name="Fosler C."/>
            <person name="Glodek A."/>
            <person name="Gu Z."/>
            <person name="Jennings D."/>
            <person name="Kraft C.L."/>
            <person name="Nguyen T."/>
            <person name="Pfannkoch C.M."/>
            <person name="Sitter C."/>
            <person name="Sutton G.G."/>
            <person name="Venter J.C."/>
            <person name="Woodage T."/>
            <person name="Smith D."/>
            <person name="Lee H.-M."/>
            <person name="Gustafson E."/>
            <person name="Cahill P."/>
            <person name="Kana A."/>
            <person name="Doucette-Stamm L."/>
            <person name="Weinstock K."/>
            <person name="Fechtel K."/>
            <person name="Weiss R.B."/>
            <person name="Dunn D.M."/>
            <person name="Green E.D."/>
            <person name="Blakesley R.W."/>
            <person name="Bouffard G.G."/>
            <person name="De Jong P.J."/>
            <person name="Osoegawa K."/>
            <person name="Zhu B."/>
            <person name="Marra M."/>
            <person name="Schein J."/>
            <person name="Bosdet I."/>
            <person name="Fjell C."/>
            <person name="Jones S."/>
            <person name="Krzywinski M."/>
            <person name="Mathewson C."/>
            <person name="Siddiqui A."/>
            <person name="Wye N."/>
            <person name="McPherson J."/>
            <person name="Zhao S."/>
            <person name="Fraser C.M."/>
            <person name="Shetty J."/>
            <person name="Shatsman S."/>
            <person name="Geer K."/>
            <person name="Chen Y."/>
            <person name="Abramzon S."/>
            <person name="Nierman W.C."/>
            <person name="Havlak P.H."/>
            <person name="Chen R."/>
            <person name="Durbin K.J."/>
            <person name="Egan A."/>
            <person name="Ren Y."/>
            <person name="Song X.-Z."/>
            <person name="Li B."/>
            <person name="Liu Y."/>
            <person name="Qin X."/>
            <person name="Cawley S."/>
            <person name="Cooney A.J."/>
            <person name="D'Souza L.M."/>
            <person name="Martin K."/>
            <person name="Wu J.Q."/>
            <person name="Gonzalez-Garay M.L."/>
            <person name="Jackson A.R."/>
            <person name="Kalafus K.J."/>
            <person name="McLeod M.P."/>
            <person name="Milosavljevic A."/>
            <person name="Virk D."/>
            <person name="Volkov A."/>
            <person name="Wheeler D.A."/>
            <person name="Zhang Z."/>
            <person name="Bailey J.A."/>
            <person name="Eichler E.E."/>
            <person name="Tuzun E."/>
            <person name="Birney E."/>
            <person name="Mongin E."/>
            <person name="Ureta-Vidal A."/>
            <person name="Woodwark C."/>
            <person name="Zdobnov E."/>
            <person name="Bork P."/>
            <person name="Suyama M."/>
            <person name="Torrents D."/>
            <person name="Alexandersson M."/>
            <person name="Trask B.J."/>
            <person name="Young J.M."/>
            <person name="Huang H."/>
            <person name="Wang H."/>
            <person name="Xing H."/>
            <person name="Daniels S."/>
            <person name="Gietzen D."/>
            <person name="Schmidt J."/>
            <person name="Stevens K."/>
            <person name="Vitt U."/>
            <person name="Wingrove J."/>
            <person name="Camara F."/>
            <person name="Mar Alba M."/>
            <person name="Abril J.F."/>
            <person name="Guigo R."/>
            <person name="Smit A."/>
            <person name="Dubchak I."/>
            <person name="Rubin E.M."/>
            <person name="Couronne O."/>
            <person name="Poliakov A."/>
            <person name="Huebner N."/>
            <person name="Ganten D."/>
            <person name="Goesele C."/>
            <person name="Hummel O."/>
            <person name="Kreitler T."/>
            <person name="Lee Y.-A."/>
            <person name="Monti J."/>
            <person name="Schulz H."/>
            <person name="Zimdahl H."/>
            <person name="Himmelbauer H."/>
            <person name="Lehrach H."/>
            <person name="Jacob H.J."/>
            <person name="Bromberg S."/>
            <person name="Gullings-Handley J."/>
            <person name="Jensen-Seaman M.I."/>
            <person name="Kwitek A.E."/>
            <person name="Lazar J."/>
            <person name="Pasko D."/>
            <person name="Tonellato P.J."/>
            <person name="Twigger S."/>
            <person name="Ponting C.P."/>
            <person name="Duarte J.M."/>
            <person name="Rice S."/>
            <person name="Goodstadt L."/>
            <person name="Beatson S.A."/>
            <person name="Emes R.D."/>
            <person name="Winter E.E."/>
            <person name="Webber C."/>
            <person name="Brandt P."/>
            <person name="Nyakatura G."/>
            <person name="Adetobi M."/>
            <person name="Chiaromonte F."/>
            <person name="Elnitski L."/>
            <person name="Eswara P."/>
            <person name="Hardison R.C."/>
            <person name="Hou M."/>
            <person name="Kolbe D."/>
            <person name="Makova K."/>
            <person name="Miller W."/>
            <person name="Nekrutenko A."/>
            <person name="Riemer C."/>
            <person name="Schwartz S."/>
            <person name="Taylor J."/>
            <person name="Yang S."/>
            <person name="Zhang Y."/>
            <person name="Lindpaintner K."/>
            <person name="Andrews T.D."/>
            <person name="Caccamo M."/>
            <person name="Clamp M."/>
            <person name="Clarke L."/>
            <person name="Curwen V."/>
            <person name="Durbin R.M."/>
            <person name="Eyras E."/>
            <person name="Searle S.M."/>
            <person name="Cooper G.M."/>
            <person name="Batzoglou S."/>
            <person name="Brudno M."/>
            <person name="Sidow A."/>
            <person name="Stone E.A."/>
            <person name="Payseur B.A."/>
            <person name="Bourque G."/>
            <person name="Lopez-Otin C."/>
            <person name="Puente X.S."/>
            <person name="Chakrabarti K."/>
            <person name="Chatterji S."/>
            <person name="Dewey C."/>
            <person name="Pachter L."/>
            <person name="Bray N."/>
            <person name="Yap V.B."/>
            <person name="Caspi A."/>
            <person name="Tesler G."/>
            <person name="Pevzner P.A."/>
            <person name="Haussler D."/>
            <person name="Roskin K.M."/>
            <person name="Baertsch R."/>
            <person name="Clawson H."/>
            <person name="Furey T.S."/>
            <person name="Hinrichs A.S."/>
            <person name="Karolchik D."/>
            <person name="Kent W.J."/>
            <person name="Rosenbloom K.R."/>
            <person name="Trumbower H."/>
            <person name="Weirauch M."/>
            <person name="Cooper D.N."/>
            <person name="Stenson P.D."/>
            <person name="Ma B."/>
            <person name="Brent M."/>
            <person name="Arumugam M."/>
            <person name="Shteynberg D."/>
            <person name="Copley R.R."/>
            <person name="Taylor M.S."/>
            <person name="Riethman H."/>
            <person name="Mudunuri U."/>
            <person name="Peterson J."/>
            <person name="Guyer M."/>
            <person name="Felsenfeld A."/>
            <person name="Old S."/>
            <person name="Mockrin S."/>
            <person name="Collins F.S."/>
        </authorList>
    </citation>
    <scope>NUCLEOTIDE SEQUENCE [LARGE SCALE GENOMIC DNA]</scope>
    <source>
        <strain>Brown Norway</strain>
    </source>
</reference>
<reference key="3">
    <citation type="journal article" date="2003" name="J. Clin. Invest.">
        <title>Neph1 and nephrin interaction in the slit diaphragm is an important determinant of glomerular permeability.</title>
        <authorList>
            <person name="Liu G."/>
            <person name="Kaw B."/>
            <person name="Kurfis J."/>
            <person name="Rahmanuddin S."/>
            <person name="Kanwar Y.S."/>
            <person name="Chugh S.S."/>
        </authorList>
    </citation>
    <scope>NUCLEOTIDE SEQUENCE [MRNA] OF 85-786</scope>
    <scope>SUBCELLULAR LOCATION</scope>
    <source>
        <strain>Sprague-Dawley</strain>
    </source>
</reference>
<reference key="4">
    <citation type="journal article" date="2008" name="J. Biol. Chem.">
        <title>Neph1, a component of the kidney slit diaphragm, is tyrosine-phosphorylated by the Src family tyrosine kinase and modulates intracellular signaling by binding to Grb2.</title>
        <authorList>
            <person name="Harita Y."/>
            <person name="Kurihara H."/>
            <person name="Kosako H."/>
            <person name="Tezuka T."/>
            <person name="Sekine T."/>
            <person name="Igarashi T."/>
            <person name="Hattori S."/>
        </authorList>
    </citation>
    <scope>PHOSPHORYLATION AT TYR-637 AND TYR-638 BY FYN</scope>
    <scope>INTERACTION WITH GRB2</scope>
</reference>
<proteinExistence type="evidence at protein level"/>
<gene>
    <name type="primary">Kirrel1</name>
    <name type="synonym">Kirrel</name>
    <name type="synonym">Neph1</name>
</gene>